<dbReference type="EMBL" id="BA000002">
    <property type="protein sequence ID" value="BAA80041.2"/>
    <property type="molecule type" value="Genomic_DNA"/>
</dbReference>
<dbReference type="PIR" id="A72705">
    <property type="entry name" value="A72705"/>
</dbReference>
<dbReference type="RefSeq" id="WP_010866150.1">
    <property type="nucleotide sequence ID" value="NC_000854.2"/>
</dbReference>
<dbReference type="SMR" id="Q9YD56"/>
<dbReference type="STRING" id="272557.APE_1056.1"/>
<dbReference type="EnsemblBacteria" id="BAA80041">
    <property type="protein sequence ID" value="BAA80041"/>
    <property type="gene ID" value="APE_1056.1"/>
</dbReference>
<dbReference type="GeneID" id="1445095"/>
<dbReference type="KEGG" id="ape:APE_1056.1"/>
<dbReference type="PATRIC" id="fig|272557.25.peg.748"/>
<dbReference type="eggNOG" id="arCOG01336">
    <property type="taxonomic scope" value="Archaea"/>
</dbReference>
<dbReference type="Proteomes" id="UP000002518">
    <property type="component" value="Chromosome"/>
</dbReference>
<dbReference type="Gene3D" id="3.30.700.20">
    <property type="entry name" value="Hypothetical protein ph0010, domain 1"/>
    <property type="match status" value="1"/>
</dbReference>
<dbReference type="Gene3D" id="3.30.1490.150">
    <property type="entry name" value="Hypothetical protein ph0010, domain 2"/>
    <property type="match status" value="1"/>
</dbReference>
<dbReference type="HAMAP" id="MF_00645">
    <property type="entry name" value="AMMECR1"/>
    <property type="match status" value="1"/>
</dbReference>
<dbReference type="InterPro" id="IPR023473">
    <property type="entry name" value="AMMECR1"/>
</dbReference>
<dbReference type="InterPro" id="IPR036071">
    <property type="entry name" value="AMMECR1_dom_sf"/>
</dbReference>
<dbReference type="InterPro" id="IPR002733">
    <property type="entry name" value="AMMECR1_domain"/>
</dbReference>
<dbReference type="InterPro" id="IPR027485">
    <property type="entry name" value="AMMECR1_N"/>
</dbReference>
<dbReference type="InterPro" id="IPR027623">
    <property type="entry name" value="AmmeMemoSam_A"/>
</dbReference>
<dbReference type="InterPro" id="IPR023472">
    <property type="entry name" value="Uncharacterised_MJ0810"/>
</dbReference>
<dbReference type="NCBIfam" id="TIGR04335">
    <property type="entry name" value="AmmeMemoSam_A"/>
    <property type="match status" value="1"/>
</dbReference>
<dbReference type="NCBIfam" id="TIGR00296">
    <property type="entry name" value="TIGR00296 family protein"/>
    <property type="match status" value="1"/>
</dbReference>
<dbReference type="PANTHER" id="PTHR13016:SF0">
    <property type="entry name" value="AMME SYNDROME CANDIDATE GENE 1 PROTEIN"/>
    <property type="match status" value="1"/>
</dbReference>
<dbReference type="PANTHER" id="PTHR13016">
    <property type="entry name" value="AMMECR1 HOMOLOG"/>
    <property type="match status" value="1"/>
</dbReference>
<dbReference type="Pfam" id="PF01871">
    <property type="entry name" value="AMMECR1"/>
    <property type="match status" value="1"/>
</dbReference>
<dbReference type="SUPFAM" id="SSF143447">
    <property type="entry name" value="AMMECR1-like"/>
    <property type="match status" value="1"/>
</dbReference>
<dbReference type="PROSITE" id="PS51112">
    <property type="entry name" value="AMMECR1"/>
    <property type="match status" value="1"/>
</dbReference>
<accession>Q9YD56</accession>
<keyword id="KW-1185">Reference proteome</keyword>
<feature type="chain" id="PRO_0000142374" description="Protein APE_1056.1">
    <location>
        <begin position="1"/>
        <end position="231"/>
    </location>
</feature>
<feature type="domain" description="AMMECR1" evidence="1">
    <location>
        <begin position="29"/>
        <end position="214"/>
    </location>
</feature>
<proteinExistence type="inferred from homology"/>
<sequence>MVGGVRIARARGPPIEPEELDDADGEALVRIARRAVEEWVEHGRRLDVEAGGKLGRPGAAFVTLERRSGDGWELRGCIGVVRPVLPLVEAVVTAAVDAASSDPRFEPLSREELDRVRVEVTVLGSMEPLPKKPHERPALVEVGLHGLYVEKPPYAGLLLPQVAVDEGWDPILFLTWACIKAGLPGTCWLREDVEIYRFRAAVWRETEPRGPVVRRDLAREAAAKGVNARVS</sequence>
<organism>
    <name type="scientific">Aeropyrum pernix (strain ATCC 700893 / DSM 11879 / JCM 9820 / NBRC 100138 / K1)</name>
    <dbReference type="NCBI Taxonomy" id="272557"/>
    <lineage>
        <taxon>Archaea</taxon>
        <taxon>Thermoproteota</taxon>
        <taxon>Thermoprotei</taxon>
        <taxon>Desulfurococcales</taxon>
        <taxon>Desulfurococcaceae</taxon>
        <taxon>Aeropyrum</taxon>
    </lineage>
</organism>
<gene>
    <name type="ordered locus">APE_1056.1</name>
</gene>
<reference key="1">
    <citation type="journal article" date="1999" name="DNA Res.">
        <title>Complete genome sequence of an aerobic hyper-thermophilic crenarchaeon, Aeropyrum pernix K1.</title>
        <authorList>
            <person name="Kawarabayasi Y."/>
            <person name="Hino Y."/>
            <person name="Horikawa H."/>
            <person name="Yamazaki S."/>
            <person name="Haikawa Y."/>
            <person name="Jin-no K."/>
            <person name="Takahashi M."/>
            <person name="Sekine M."/>
            <person name="Baba S."/>
            <person name="Ankai A."/>
            <person name="Kosugi H."/>
            <person name="Hosoyama A."/>
            <person name="Fukui S."/>
            <person name="Nagai Y."/>
            <person name="Nishijima K."/>
            <person name="Nakazawa H."/>
            <person name="Takamiya M."/>
            <person name="Masuda S."/>
            <person name="Funahashi T."/>
            <person name="Tanaka T."/>
            <person name="Kudoh Y."/>
            <person name="Yamazaki J."/>
            <person name="Kushida N."/>
            <person name="Oguchi A."/>
            <person name="Aoki K."/>
            <person name="Kubota K."/>
            <person name="Nakamura Y."/>
            <person name="Nomura N."/>
            <person name="Sako Y."/>
            <person name="Kikuchi H."/>
        </authorList>
    </citation>
    <scope>NUCLEOTIDE SEQUENCE [LARGE SCALE GENOMIC DNA]</scope>
    <source>
        <strain>ATCC 700893 / DSM 11879 / JCM 9820 / NBRC 100138 / K1</strain>
    </source>
</reference>
<protein>
    <recommendedName>
        <fullName evidence="1">Protein APE_1056.1</fullName>
    </recommendedName>
</protein>
<name>Y1056_AERPE</name>
<evidence type="ECO:0000255" key="1">
    <source>
        <dbReference type="HAMAP-Rule" id="MF_00645"/>
    </source>
</evidence>